<name>DIT22_ARATH</name>
<feature type="transit peptide" description="Chloroplast" evidence="2">
    <location>
        <begin position="1"/>
        <end position="54"/>
    </location>
</feature>
<feature type="chain" id="PRO_0000419185" description="Dicarboxylate transporter 2.2, chloroplastic">
    <location>
        <begin position="55"/>
        <end position="549"/>
    </location>
</feature>
<feature type="transmembrane region" description="Helical" evidence="2">
    <location>
        <begin position="79"/>
        <end position="99"/>
    </location>
</feature>
<feature type="transmembrane region" description="Helical" evidence="2">
    <location>
        <begin position="115"/>
        <end position="135"/>
    </location>
</feature>
<feature type="transmembrane region" description="Helical" evidence="2">
    <location>
        <begin position="151"/>
        <end position="171"/>
    </location>
</feature>
<feature type="transmembrane region" description="Helical" evidence="2">
    <location>
        <begin position="220"/>
        <end position="240"/>
    </location>
</feature>
<feature type="transmembrane region" description="Helical" evidence="2">
    <location>
        <begin position="247"/>
        <end position="267"/>
    </location>
</feature>
<feature type="transmembrane region" description="Helical" evidence="2">
    <location>
        <begin position="294"/>
        <end position="314"/>
    </location>
</feature>
<feature type="transmembrane region" description="Helical" evidence="2">
    <location>
        <begin position="344"/>
        <end position="364"/>
    </location>
</feature>
<feature type="transmembrane region" description="Helical" evidence="2">
    <location>
        <begin position="365"/>
        <end position="385"/>
    </location>
</feature>
<feature type="transmembrane region" description="Helical" evidence="2">
    <location>
        <begin position="403"/>
        <end position="423"/>
    </location>
</feature>
<feature type="transmembrane region" description="Helical" evidence="2">
    <location>
        <begin position="436"/>
        <end position="456"/>
    </location>
</feature>
<feature type="transmembrane region" description="Helical" evidence="2">
    <location>
        <begin position="470"/>
        <end position="490"/>
    </location>
</feature>
<feature type="transmembrane region" description="Helical" evidence="2">
    <location>
        <begin position="523"/>
        <end position="543"/>
    </location>
</feature>
<feature type="region of interest" description="Disordered" evidence="3">
    <location>
        <begin position="57"/>
        <end position="79"/>
    </location>
</feature>
<feature type="compositionally biased region" description="Pro residues" evidence="3">
    <location>
        <begin position="67"/>
        <end position="77"/>
    </location>
</feature>
<gene>
    <name type="primary">DIT2-2</name>
    <name type="ordered locus">At5g64280</name>
    <name type="ORF">MSJ1.12</name>
</gene>
<dbReference type="EMBL" id="AB008268">
    <property type="protein sequence ID" value="BAB09859.1"/>
    <property type="molecule type" value="Genomic_DNA"/>
</dbReference>
<dbReference type="EMBL" id="CP002688">
    <property type="protein sequence ID" value="AED97865.1"/>
    <property type="molecule type" value="Genomic_DNA"/>
</dbReference>
<dbReference type="EMBL" id="AY045893">
    <property type="protein sequence ID" value="AAK76567.1"/>
    <property type="molecule type" value="mRNA"/>
</dbReference>
<dbReference type="EMBL" id="AY133825">
    <property type="protein sequence ID" value="AAM91759.1"/>
    <property type="molecule type" value="mRNA"/>
</dbReference>
<dbReference type="SMR" id="Q9FMF8"/>
<dbReference type="BioGRID" id="21791">
    <property type="interactions" value="1"/>
</dbReference>
<dbReference type="FunCoup" id="Q9FMF8">
    <property type="interactions" value="5"/>
</dbReference>
<dbReference type="IntAct" id="Q9FMF8">
    <property type="interactions" value="1"/>
</dbReference>
<dbReference type="STRING" id="3702.Q9FMF8"/>
<dbReference type="iPTMnet" id="Q9FMF8"/>
<dbReference type="PaxDb" id="3702-AT5G64280.1"/>
<dbReference type="ProteomicsDB" id="224166"/>
<dbReference type="EnsemblPlants" id="AT5G64280.1">
    <property type="protein sequence ID" value="AT5G64280.1"/>
    <property type="gene ID" value="AT5G64280"/>
</dbReference>
<dbReference type="GeneID" id="836549"/>
<dbReference type="Gramene" id="AT5G64280.1">
    <property type="protein sequence ID" value="AT5G64280.1"/>
    <property type="gene ID" value="AT5G64280"/>
</dbReference>
<dbReference type="KEGG" id="ath:AT5G64280"/>
<dbReference type="Araport" id="AT5G64280"/>
<dbReference type="TAIR" id="AT5G64280">
    <property type="gene designation" value="DIT2.2"/>
</dbReference>
<dbReference type="eggNOG" id="ENOG502QQ8W">
    <property type="taxonomic scope" value="Eukaryota"/>
</dbReference>
<dbReference type="HOGENOM" id="CLU_005170_7_3_1"/>
<dbReference type="InParanoid" id="Q9FMF8"/>
<dbReference type="OMA" id="PQAWRYF"/>
<dbReference type="PhylomeDB" id="Q9FMF8"/>
<dbReference type="PRO" id="PR:Q9FMF8"/>
<dbReference type="Proteomes" id="UP000006548">
    <property type="component" value="Chromosome 5"/>
</dbReference>
<dbReference type="ExpressionAtlas" id="Q9FMF8">
    <property type="expression patterns" value="baseline and differential"/>
</dbReference>
<dbReference type="GO" id="GO:0009706">
    <property type="term" value="C:chloroplast inner membrane"/>
    <property type="evidence" value="ECO:0007669"/>
    <property type="project" value="UniProtKB-SubCell"/>
</dbReference>
<dbReference type="GO" id="GO:0009536">
    <property type="term" value="C:plastid"/>
    <property type="evidence" value="ECO:0007005"/>
    <property type="project" value="TAIR"/>
</dbReference>
<dbReference type="GO" id="GO:0015140">
    <property type="term" value="F:malate transmembrane transporter activity"/>
    <property type="evidence" value="ECO:0007669"/>
    <property type="project" value="UniProtKB-ARBA"/>
</dbReference>
<dbReference type="InterPro" id="IPR030676">
    <property type="entry name" value="CitT-rel"/>
</dbReference>
<dbReference type="InterPro" id="IPR001898">
    <property type="entry name" value="SLC13A/DASS"/>
</dbReference>
<dbReference type="NCBIfam" id="TIGR00785">
    <property type="entry name" value="dass"/>
    <property type="match status" value="1"/>
</dbReference>
<dbReference type="PANTHER" id="PTHR42826">
    <property type="entry name" value="DICARBOXYLATE TRANSPORTER 2.1, CHLOROPLASTIC"/>
    <property type="match status" value="1"/>
</dbReference>
<dbReference type="Pfam" id="PF00939">
    <property type="entry name" value="Na_sulph_symp"/>
    <property type="match status" value="1"/>
</dbReference>
<reference key="1">
    <citation type="journal article" date="1997" name="DNA Res.">
        <title>Structural analysis of Arabidopsis thaliana chromosome 5. III. Sequence features of the regions of 1,191,918 bp covered by seventeen physically assigned P1 clones.</title>
        <authorList>
            <person name="Nakamura Y."/>
            <person name="Sato S."/>
            <person name="Kaneko T."/>
            <person name="Kotani H."/>
            <person name="Asamizu E."/>
            <person name="Miyajima N."/>
            <person name="Tabata S."/>
        </authorList>
    </citation>
    <scope>NUCLEOTIDE SEQUENCE [LARGE SCALE GENOMIC DNA]</scope>
    <source>
        <strain>cv. Columbia</strain>
    </source>
</reference>
<reference key="2">
    <citation type="journal article" date="2017" name="Plant J.">
        <title>Araport11: a complete reannotation of the Arabidopsis thaliana reference genome.</title>
        <authorList>
            <person name="Cheng C.Y."/>
            <person name="Krishnakumar V."/>
            <person name="Chan A.P."/>
            <person name="Thibaud-Nissen F."/>
            <person name="Schobel S."/>
            <person name="Town C.D."/>
        </authorList>
    </citation>
    <scope>GENOME REANNOTATION</scope>
    <source>
        <strain>cv. Columbia</strain>
    </source>
</reference>
<reference key="3">
    <citation type="journal article" date="2003" name="Science">
        <title>Empirical analysis of transcriptional activity in the Arabidopsis genome.</title>
        <authorList>
            <person name="Yamada K."/>
            <person name="Lim J."/>
            <person name="Dale J.M."/>
            <person name="Chen H."/>
            <person name="Shinn P."/>
            <person name="Palm C.J."/>
            <person name="Southwick A.M."/>
            <person name="Wu H.C."/>
            <person name="Kim C.J."/>
            <person name="Nguyen M."/>
            <person name="Pham P.K."/>
            <person name="Cheuk R.F."/>
            <person name="Karlin-Newmann G."/>
            <person name="Liu S.X."/>
            <person name="Lam B."/>
            <person name="Sakano H."/>
            <person name="Wu T."/>
            <person name="Yu G."/>
            <person name="Miranda M."/>
            <person name="Quach H.L."/>
            <person name="Tripp M."/>
            <person name="Chang C.H."/>
            <person name="Lee J.M."/>
            <person name="Toriumi M.J."/>
            <person name="Chan M.M."/>
            <person name="Tang C.C."/>
            <person name="Onodera C.S."/>
            <person name="Deng J.M."/>
            <person name="Akiyama K."/>
            <person name="Ansari Y."/>
            <person name="Arakawa T."/>
            <person name="Banh J."/>
            <person name="Banno F."/>
            <person name="Bowser L."/>
            <person name="Brooks S.Y."/>
            <person name="Carninci P."/>
            <person name="Chao Q."/>
            <person name="Choy N."/>
            <person name="Enju A."/>
            <person name="Goldsmith A.D."/>
            <person name="Gurjal M."/>
            <person name="Hansen N.F."/>
            <person name="Hayashizaki Y."/>
            <person name="Johnson-Hopson C."/>
            <person name="Hsuan V.W."/>
            <person name="Iida K."/>
            <person name="Karnes M."/>
            <person name="Khan S."/>
            <person name="Koesema E."/>
            <person name="Ishida J."/>
            <person name="Jiang P.X."/>
            <person name="Jones T."/>
            <person name="Kawai J."/>
            <person name="Kamiya A."/>
            <person name="Meyers C."/>
            <person name="Nakajima M."/>
            <person name="Narusaka M."/>
            <person name="Seki M."/>
            <person name="Sakurai T."/>
            <person name="Satou M."/>
            <person name="Tamse R."/>
            <person name="Vaysberg M."/>
            <person name="Wallender E.K."/>
            <person name="Wong C."/>
            <person name="Yamamura Y."/>
            <person name="Yuan S."/>
            <person name="Shinozaki K."/>
            <person name="Davis R.W."/>
            <person name="Theologis A."/>
            <person name="Ecker J.R."/>
        </authorList>
    </citation>
    <scope>NUCLEOTIDE SEQUENCE [LARGE SCALE MRNA]</scope>
    <source>
        <strain>cv. Columbia</strain>
    </source>
</reference>
<reference key="4">
    <citation type="journal article" date="2002" name="Plant Cell Physiol.">
        <title>Identifying and characterizing plastidic 2-oxoglutarate/malate and dicarboxylate transporters in Arabidopsis thaliana.</title>
        <authorList>
            <person name="Taniguchi M."/>
            <person name="Taniguchi Y."/>
            <person name="Kawasaki M."/>
            <person name="Takeda S."/>
            <person name="Kato T."/>
            <person name="Sato S."/>
            <person name="Tabata S."/>
            <person name="Miyake H."/>
            <person name="Sugiyama T."/>
        </authorList>
    </citation>
    <scope>TISSUE SPECIFICITY</scope>
</reference>
<reference key="5">
    <citation type="journal article" date="2003" name="Plant J.">
        <title>The Arabidopsis mutant dct is deficient in the plastidic glutamate/malate translocator DiT2.</title>
        <authorList>
            <person name="Renne P."/>
            <person name="Dressen U."/>
            <person name="Hebbeker U."/>
            <person name="Hille D."/>
            <person name="Flugge U.I."/>
            <person name="Westhoff P."/>
            <person name="Weber A.P."/>
        </authorList>
    </citation>
    <scope>TISSUE SPECIFICITY</scope>
</reference>
<keyword id="KW-0150">Chloroplast</keyword>
<keyword id="KW-0472">Membrane</keyword>
<keyword id="KW-0934">Plastid</keyword>
<keyword id="KW-1001">Plastid inner membrane</keyword>
<keyword id="KW-1185">Reference proteome</keyword>
<keyword id="KW-0809">Transit peptide</keyword>
<keyword id="KW-0812">Transmembrane</keyword>
<keyword id="KW-1133">Transmembrane helix</keyword>
<keyword id="KW-0813">Transport</keyword>
<comment type="function">
    <text evidence="1">May be involved in the transport of dicarboxylate compounds.</text>
</comment>
<comment type="subcellular location">
    <subcellularLocation>
        <location evidence="6">Plastid</location>
        <location evidence="6">Chloroplast inner membrane</location>
        <topology evidence="6">Multi-pass membrane protein</topology>
    </subcellularLocation>
</comment>
<comment type="tissue specificity">
    <text evidence="4 5">Expressed in roots, rosette and cauline leaves, stems, flowers and siliques.</text>
</comment>
<comment type="similarity">
    <text evidence="6">Belongs to the SLC13A/DASS transporter (TC 2.A.47) family. DIT1 subfamily.</text>
</comment>
<protein>
    <recommendedName>
        <fullName>Dicarboxylate transporter 2.2, chloroplastic</fullName>
    </recommendedName>
    <alternativeName>
        <fullName>AtpDCT2</fullName>
    </alternativeName>
</protein>
<proteinExistence type="evidence at transcript level"/>
<evidence type="ECO:0000250" key="1"/>
<evidence type="ECO:0000255" key="2"/>
<evidence type="ECO:0000256" key="3">
    <source>
        <dbReference type="SAM" id="MobiDB-lite"/>
    </source>
</evidence>
<evidence type="ECO:0000269" key="4">
    <source>
    </source>
</evidence>
<evidence type="ECO:0000269" key="5">
    <source>
    </source>
</evidence>
<evidence type="ECO:0000305" key="6"/>
<sequence>MESLALRSISLSASYLSLHRSSSKSFALLPPSISVHTSPTLRSLSISSPRFTLRATASSLPEEQNKPQPPPPSPPQPQGAKLIPLAISVSIGLIVRFLIPRPEQVTSQGWQLLSIFLFTISGLVLGPLPVGAWAFIGLTASIVTKTLPFSTAFAAFTNELIWLIAISFFFARGFIKTGLGDRIATYFVKWLGKSTLGLSYGLAFCETLMGLIMPSTMARAGGVFLPVIKSLAISAGSYPGDPSSRKLGSFLIQTQLQCSGASGAILLTSAAQNLLCLKLAREVGVVISNPWITWFKVASVPAFVSLLCTPLIIYKLYPPELKHTPEAPAAAAKKLERLGPITKNEWIMLGAMAFTVSLWVFGEAIGIASVVSAMIGLSTLLLLGVINWDDCLSDKSAWDSLTWFAVLIGMAGQLTNLGVVAWMSDCVAKLLQSLSLTWPASFIILQACYLLIHYLFASQTGHAGALYPPFLAMQIAAGVPGVLAALCLAFNNNLSGALAHYSGGPAALYYGAGYVDLRDMFRVGFVMALVQAIIWGGVGSFWWKFLGLY</sequence>
<organism>
    <name type="scientific">Arabidopsis thaliana</name>
    <name type="common">Mouse-ear cress</name>
    <dbReference type="NCBI Taxonomy" id="3702"/>
    <lineage>
        <taxon>Eukaryota</taxon>
        <taxon>Viridiplantae</taxon>
        <taxon>Streptophyta</taxon>
        <taxon>Embryophyta</taxon>
        <taxon>Tracheophyta</taxon>
        <taxon>Spermatophyta</taxon>
        <taxon>Magnoliopsida</taxon>
        <taxon>eudicotyledons</taxon>
        <taxon>Gunneridae</taxon>
        <taxon>Pentapetalae</taxon>
        <taxon>rosids</taxon>
        <taxon>malvids</taxon>
        <taxon>Brassicales</taxon>
        <taxon>Brassicaceae</taxon>
        <taxon>Camelineae</taxon>
        <taxon>Arabidopsis</taxon>
    </lineage>
</organism>
<accession>Q9FMF8</accession>